<comment type="function">
    <text evidence="1">This protein is located at the 30S-50S ribosomal subunit interface and may play a role in the structure and function of the aminoacyl-tRNA binding site.</text>
</comment>
<comment type="similarity">
    <text evidence="1">Belongs to the bacterial ribosomal protein bL19 family.</text>
</comment>
<evidence type="ECO:0000255" key="1">
    <source>
        <dbReference type="HAMAP-Rule" id="MF_00402"/>
    </source>
</evidence>
<evidence type="ECO:0000305" key="2"/>
<accession>Q6G9X2</accession>
<organism>
    <name type="scientific">Staphylococcus aureus (strain MSSA476)</name>
    <dbReference type="NCBI Taxonomy" id="282459"/>
    <lineage>
        <taxon>Bacteria</taxon>
        <taxon>Bacillati</taxon>
        <taxon>Bacillota</taxon>
        <taxon>Bacilli</taxon>
        <taxon>Bacillales</taxon>
        <taxon>Staphylococcaceae</taxon>
        <taxon>Staphylococcus</taxon>
    </lineage>
</organism>
<proteinExistence type="inferred from homology"/>
<protein>
    <recommendedName>
        <fullName evidence="1">Large ribosomal subunit protein bL19</fullName>
    </recommendedName>
    <alternativeName>
        <fullName evidence="2">50S ribosomal protein L19</fullName>
    </alternativeName>
</protein>
<feature type="chain" id="PRO_0000163532" description="Large ribosomal subunit protein bL19">
    <location>
        <begin position="1"/>
        <end position="116"/>
    </location>
</feature>
<reference key="1">
    <citation type="journal article" date="2004" name="Proc. Natl. Acad. Sci. U.S.A.">
        <title>Complete genomes of two clinical Staphylococcus aureus strains: evidence for the rapid evolution of virulence and drug resistance.</title>
        <authorList>
            <person name="Holden M.T.G."/>
            <person name="Feil E.J."/>
            <person name="Lindsay J.A."/>
            <person name="Peacock S.J."/>
            <person name="Day N.P.J."/>
            <person name="Enright M.C."/>
            <person name="Foster T.J."/>
            <person name="Moore C.E."/>
            <person name="Hurst L."/>
            <person name="Atkin R."/>
            <person name="Barron A."/>
            <person name="Bason N."/>
            <person name="Bentley S.D."/>
            <person name="Chillingworth C."/>
            <person name="Chillingworth T."/>
            <person name="Churcher C."/>
            <person name="Clark L."/>
            <person name="Corton C."/>
            <person name="Cronin A."/>
            <person name="Doggett J."/>
            <person name="Dowd L."/>
            <person name="Feltwell T."/>
            <person name="Hance Z."/>
            <person name="Harris B."/>
            <person name="Hauser H."/>
            <person name="Holroyd S."/>
            <person name="Jagels K."/>
            <person name="James K.D."/>
            <person name="Lennard N."/>
            <person name="Line A."/>
            <person name="Mayes R."/>
            <person name="Moule S."/>
            <person name="Mungall K."/>
            <person name="Ormond D."/>
            <person name="Quail M.A."/>
            <person name="Rabbinowitsch E."/>
            <person name="Rutherford K.M."/>
            <person name="Sanders M."/>
            <person name="Sharp S."/>
            <person name="Simmonds M."/>
            <person name="Stevens K."/>
            <person name="Whitehead S."/>
            <person name="Barrell B.G."/>
            <person name="Spratt B.G."/>
            <person name="Parkhill J."/>
        </authorList>
    </citation>
    <scope>NUCLEOTIDE SEQUENCE [LARGE SCALE GENOMIC DNA]</scope>
    <source>
        <strain>MSSA476</strain>
    </source>
</reference>
<dbReference type="EMBL" id="BX571857">
    <property type="protein sequence ID" value="CAG42952.1"/>
    <property type="molecule type" value="Genomic_DNA"/>
</dbReference>
<dbReference type="RefSeq" id="WP_000181404.1">
    <property type="nucleotide sequence ID" value="NC_002953.3"/>
</dbReference>
<dbReference type="SMR" id="Q6G9X2"/>
<dbReference type="GeneID" id="98345556"/>
<dbReference type="KEGG" id="sas:SAS1175"/>
<dbReference type="HOGENOM" id="CLU_103507_2_1_9"/>
<dbReference type="GO" id="GO:0022625">
    <property type="term" value="C:cytosolic large ribosomal subunit"/>
    <property type="evidence" value="ECO:0007669"/>
    <property type="project" value="TreeGrafter"/>
</dbReference>
<dbReference type="GO" id="GO:0003735">
    <property type="term" value="F:structural constituent of ribosome"/>
    <property type="evidence" value="ECO:0007669"/>
    <property type="project" value="InterPro"/>
</dbReference>
<dbReference type="GO" id="GO:0006412">
    <property type="term" value="P:translation"/>
    <property type="evidence" value="ECO:0007669"/>
    <property type="project" value="UniProtKB-UniRule"/>
</dbReference>
<dbReference type="FunFam" id="2.30.30.790:FF:000001">
    <property type="entry name" value="50S ribosomal protein L19"/>
    <property type="match status" value="1"/>
</dbReference>
<dbReference type="Gene3D" id="2.30.30.790">
    <property type="match status" value="1"/>
</dbReference>
<dbReference type="HAMAP" id="MF_00402">
    <property type="entry name" value="Ribosomal_bL19"/>
    <property type="match status" value="1"/>
</dbReference>
<dbReference type="InterPro" id="IPR001857">
    <property type="entry name" value="Ribosomal_bL19"/>
</dbReference>
<dbReference type="InterPro" id="IPR018257">
    <property type="entry name" value="Ribosomal_bL19_CS"/>
</dbReference>
<dbReference type="InterPro" id="IPR038657">
    <property type="entry name" value="Ribosomal_bL19_sf"/>
</dbReference>
<dbReference type="InterPro" id="IPR008991">
    <property type="entry name" value="Translation_prot_SH3-like_sf"/>
</dbReference>
<dbReference type="NCBIfam" id="TIGR01024">
    <property type="entry name" value="rplS_bact"/>
    <property type="match status" value="1"/>
</dbReference>
<dbReference type="PANTHER" id="PTHR15680:SF9">
    <property type="entry name" value="LARGE RIBOSOMAL SUBUNIT PROTEIN BL19M"/>
    <property type="match status" value="1"/>
</dbReference>
<dbReference type="PANTHER" id="PTHR15680">
    <property type="entry name" value="RIBOSOMAL PROTEIN L19"/>
    <property type="match status" value="1"/>
</dbReference>
<dbReference type="Pfam" id="PF01245">
    <property type="entry name" value="Ribosomal_L19"/>
    <property type="match status" value="1"/>
</dbReference>
<dbReference type="PIRSF" id="PIRSF002191">
    <property type="entry name" value="Ribosomal_L19"/>
    <property type="match status" value="1"/>
</dbReference>
<dbReference type="PRINTS" id="PR00061">
    <property type="entry name" value="RIBOSOMALL19"/>
</dbReference>
<dbReference type="SUPFAM" id="SSF50104">
    <property type="entry name" value="Translation proteins SH3-like domain"/>
    <property type="match status" value="1"/>
</dbReference>
<dbReference type="PROSITE" id="PS01015">
    <property type="entry name" value="RIBOSOMAL_L19"/>
    <property type="match status" value="1"/>
</dbReference>
<keyword id="KW-0687">Ribonucleoprotein</keyword>
<keyword id="KW-0689">Ribosomal protein</keyword>
<sequence>MTNHKLIEAVTKSQLRTDLPSFRPGDTLRVHVRIIEGTRERIQVFEGVVIKRRGGGVSETFTVRKISSGVGVERTFPLHTPKIEKIEVKRRGKVRRAKLYYLRSLRGKAARIQEIR</sequence>
<gene>
    <name evidence="1" type="primary">rplS</name>
    <name type="ordered locus">SAS1175</name>
</gene>
<name>RL19_STAAS</name>